<comment type="function">
    <text evidence="2 3">Component of a hydro-lyase with broad substrate specificity for cis-unsaturated tricarboxylic acids. Catalyzes both the reversible dehydration of (R)-homocitrate ((R)-2-hydroxybutane-1,2,4-tricarboxylate) to produce cis-homoaconitate ((Z)-but-1-ene-1,2,4-tricarboxylate), and its hydration to homoisocitrate ((1R,2S)-1-hydroxybutane-1,2,4-tricarboxylate). Is also able to hydrate the analogous longer chain substrates cis-homo(2)-aconitate, cis-homo(3)-aconitate, and even the non-physiological cis-homo(4)-aconitate with similar efficiency. These reactions are part of the biosynthesis pathway of coenzyme B. Can also catalyze the hydration of maleate to (R)-malate, and that of cis-aconitate. Cannot catalyze the hydration of citraconate and the dehydration of (S)-homocitrate, citramalate, 2-isopropylmalate, 3-isopropylmalate, citrate or threo-DL-isocitrate.</text>
</comment>
<comment type="catalytic activity">
    <reaction evidence="2">
        <text>(2R)-homocitrate = (2R,3S)-homoisocitrate</text>
        <dbReference type="Rhea" id="RHEA:32303"/>
        <dbReference type="ChEBI" id="CHEBI:15404"/>
        <dbReference type="ChEBI" id="CHEBI:58884"/>
        <dbReference type="EC" id="4.2.1.114"/>
    </reaction>
    <physiologicalReaction direction="left-to-right" evidence="5">
        <dbReference type="Rhea" id="RHEA:32304"/>
    </physiologicalReaction>
</comment>
<comment type="catalytic activity">
    <reaction evidence="2">
        <text>(2R)-homocitrate = cis-homoaconitate + H2O</text>
        <dbReference type="Rhea" id="RHEA:26101"/>
        <dbReference type="ChEBI" id="CHEBI:15377"/>
        <dbReference type="ChEBI" id="CHEBI:58174"/>
        <dbReference type="ChEBI" id="CHEBI:58884"/>
    </reaction>
    <physiologicalReaction direction="left-to-right" evidence="5">
        <dbReference type="Rhea" id="RHEA:26102"/>
    </physiologicalReaction>
</comment>
<comment type="catalytic activity">
    <reaction evidence="2">
        <text>(2R,3S)-homoisocitrate = cis-homoaconitate + H2O</text>
        <dbReference type="Rhea" id="RHEA:15485"/>
        <dbReference type="ChEBI" id="CHEBI:15377"/>
        <dbReference type="ChEBI" id="CHEBI:15404"/>
        <dbReference type="ChEBI" id="CHEBI:58174"/>
    </reaction>
    <physiologicalReaction direction="right-to-left" evidence="5">
        <dbReference type="Rhea" id="RHEA:15487"/>
    </physiologicalReaction>
</comment>
<comment type="catalytic activity">
    <reaction evidence="2">
        <text>cis-(homo)2aconitate + H2O = (2R,3S)-iso(homo)2citrate</text>
        <dbReference type="Rhea" id="RHEA:68416"/>
        <dbReference type="ChEBI" id="CHEBI:15377"/>
        <dbReference type="ChEBI" id="CHEBI:72710"/>
        <dbReference type="ChEBI" id="CHEBI:72722"/>
        <dbReference type="EC" id="4.2.1.114"/>
    </reaction>
    <physiologicalReaction direction="left-to-right" evidence="5">
        <dbReference type="Rhea" id="RHEA:68417"/>
    </physiologicalReaction>
</comment>
<comment type="catalytic activity">
    <reaction evidence="2">
        <text>cis-(homo)3aconitate + H2O = (2R,3S)-iso(homo)3citrate</text>
        <dbReference type="Rhea" id="RHEA:68420"/>
        <dbReference type="ChEBI" id="CHEBI:15377"/>
        <dbReference type="ChEBI" id="CHEBI:72712"/>
        <dbReference type="ChEBI" id="CHEBI:177881"/>
        <dbReference type="EC" id="4.2.1.114"/>
    </reaction>
    <physiologicalReaction direction="left-to-right" evidence="5">
        <dbReference type="Rhea" id="RHEA:68421"/>
    </physiologicalReaction>
</comment>
<comment type="catalytic activity">
    <reaction evidence="2">
        <text>(R)-malate = maleate + H2O</text>
        <dbReference type="Rhea" id="RHEA:23692"/>
        <dbReference type="ChEBI" id="CHEBI:15377"/>
        <dbReference type="ChEBI" id="CHEBI:15588"/>
        <dbReference type="ChEBI" id="CHEBI:30780"/>
    </reaction>
</comment>
<comment type="catalytic activity">
    <reaction evidence="3">
        <text>cis-aconitate + H2O = D-threo-isocitrate</text>
        <dbReference type="Rhea" id="RHEA:22144"/>
        <dbReference type="ChEBI" id="CHEBI:15377"/>
        <dbReference type="ChEBI" id="CHEBI:15562"/>
        <dbReference type="ChEBI" id="CHEBI:16383"/>
    </reaction>
</comment>
<comment type="biophysicochemical properties">
    <kinetics>
        <KM evidence="2">22 uM for cis-homoaconitate (at 60 degrees Celsius)</KM>
        <KM evidence="2">30 uM for cis-homo(2)-aconitate (at 60 degrees Celsius)</KM>
        <KM evidence="2">36 uM for cis-homo(3)-aconitate (at 60 degrees Celsius)</KM>
        <KM evidence="2">175 uM for cis-homo(4)-aconitate (at 60 degrees Celsius)</KM>
        <KM evidence="2">330 uM for maleate (at 60 degrees Celsius)</KM>
        <KM>1500 uM for (R)-homocitrate (at 60 degrees Celsius)</KM>
        <KM evidence="3">300 uM for cis-aconitate</KM>
        <Vmax evidence="2">0.68 umol/min/mg enzyme for cis-homoaconitate hydration reaction (at 60 degrees Celsius)</Vmax>
        <Vmax evidence="2">0.6 umol/min/mg enzyme for cis-homo(2)aconitate hydration reaction (at 60 degrees Celsius)</Vmax>
        <Vmax evidence="2">2.2 umol/min/mg enzyme for cis-homo(3)aconitate hydration reaction (at 60 degrees Celsius)</Vmax>
        <Vmax evidence="2">5.1 umol/min/mg enzyme for cis-homo(4)aconitate hydration reaction (at 60 degrees Celsius)</Vmax>
        <Vmax evidence="2">5.5 umol/min/mg enzyme for maleate hydration reaction (at 60 degrees Celsius)</Vmax>
        <Vmax evidence="2">0.59 umol/min/mg enzyme for (R)-homocitrate dehydration reaction (at 60 degrees Celsius)</Vmax>
        <text evidence="3">kcat is 0.75 sec(-1) for cis-aconitate hydration reaction (PubMed:20170198). Kinetic parameters measured using the HacAB complex.</text>
    </kinetics>
    <phDependence>
        <text evidence="2">Optimum pH is 9. Active from pH 8 to 10.</text>
    </phDependence>
</comment>
<comment type="pathway">
    <text>Organic acid metabolism; 2-oxosuberate biosynthesis.</text>
</comment>
<comment type="subunit">
    <text evidence="1">Heterotetramer of 2 HacA and 2 HacB proteins. Cannot form a complex with LeuC.</text>
</comment>
<comment type="similarity">
    <text evidence="4">Belongs to the LeuD family. LeuD type 2 subfamily.</text>
</comment>
<organism>
    <name type="scientific">Methanocaldococcus jannaschii (strain ATCC 43067 / DSM 2661 / JAL-1 / JCM 10045 / NBRC 100440)</name>
    <name type="common">Methanococcus jannaschii</name>
    <dbReference type="NCBI Taxonomy" id="243232"/>
    <lineage>
        <taxon>Archaea</taxon>
        <taxon>Methanobacteriati</taxon>
        <taxon>Methanobacteriota</taxon>
        <taxon>Methanomada group</taxon>
        <taxon>Methanococci</taxon>
        <taxon>Methanococcales</taxon>
        <taxon>Methanocaldococcaceae</taxon>
        <taxon>Methanocaldococcus</taxon>
    </lineage>
</organism>
<gene>
    <name type="primary">hacB</name>
    <name type="ordered locus">MJ1271</name>
</gene>
<proteinExistence type="evidence at protein level"/>
<dbReference type="EC" id="4.2.1.114" evidence="2"/>
<dbReference type="EMBL" id="L77117">
    <property type="protein sequence ID" value="AAB99277.1"/>
    <property type="molecule type" value="Genomic_DNA"/>
</dbReference>
<dbReference type="PIR" id="F64458">
    <property type="entry name" value="F64458"/>
</dbReference>
<dbReference type="RefSeq" id="WP_010870784.1">
    <property type="nucleotide sequence ID" value="NC_000909.1"/>
</dbReference>
<dbReference type="PDB" id="2PKP">
    <property type="method" value="X-ray"/>
    <property type="resolution" value="2.10 A"/>
    <property type="chains" value="A=1-170"/>
</dbReference>
<dbReference type="PDBsum" id="2PKP"/>
<dbReference type="SMR" id="Q58667"/>
<dbReference type="FunCoup" id="Q58667">
    <property type="interactions" value="195"/>
</dbReference>
<dbReference type="STRING" id="243232.MJ_1271"/>
<dbReference type="PaxDb" id="243232-MJ_1271"/>
<dbReference type="EnsemblBacteria" id="AAB99277">
    <property type="protein sequence ID" value="AAB99277"/>
    <property type="gene ID" value="MJ_1271"/>
</dbReference>
<dbReference type="GeneID" id="1452169"/>
<dbReference type="KEGG" id="mja:MJ_1271"/>
<dbReference type="eggNOG" id="arCOG02230">
    <property type="taxonomic scope" value="Archaea"/>
</dbReference>
<dbReference type="HOGENOM" id="CLU_081378_1_1_2"/>
<dbReference type="InParanoid" id="Q58667"/>
<dbReference type="OrthoDB" id="6505at2157"/>
<dbReference type="PhylomeDB" id="Q58667"/>
<dbReference type="BioCyc" id="MetaCyc:MONOMER-2005"/>
<dbReference type="SABIO-RK" id="Q58667"/>
<dbReference type="UniPathway" id="UPA00919"/>
<dbReference type="EvolutionaryTrace" id="Q58667"/>
<dbReference type="Proteomes" id="UP000000805">
    <property type="component" value="Chromosome"/>
</dbReference>
<dbReference type="GO" id="GO:1902494">
    <property type="term" value="C:catalytic complex"/>
    <property type="evidence" value="ECO:0000315"/>
    <property type="project" value="CAFA"/>
</dbReference>
<dbReference type="GO" id="GO:0003994">
    <property type="term" value="F:aconitate hydratase activity"/>
    <property type="evidence" value="ECO:0000315"/>
    <property type="project" value="CAFA"/>
</dbReference>
<dbReference type="GO" id="GO:0004409">
    <property type="term" value="F:homoaconitate hydratase activity"/>
    <property type="evidence" value="ECO:0007669"/>
    <property type="project" value="UniProtKB-UniRule"/>
</dbReference>
<dbReference type="GO" id="GO:0050075">
    <property type="term" value="F:maleate hydratase activity"/>
    <property type="evidence" value="ECO:0007669"/>
    <property type="project" value="RHEA"/>
</dbReference>
<dbReference type="GO" id="GO:0042803">
    <property type="term" value="F:protein homodimerization activity"/>
    <property type="evidence" value="ECO:0000314"/>
    <property type="project" value="CAFA"/>
</dbReference>
<dbReference type="GO" id="GO:0008270">
    <property type="term" value="F:zinc ion binding"/>
    <property type="evidence" value="ECO:0000314"/>
    <property type="project" value="CAFA"/>
</dbReference>
<dbReference type="GO" id="GO:0019298">
    <property type="term" value="P:coenzyme B biosynthetic process"/>
    <property type="evidence" value="ECO:0007669"/>
    <property type="project" value="UniProtKB-UniRule"/>
</dbReference>
<dbReference type="CDD" id="cd01577">
    <property type="entry name" value="IPMI_Swivel"/>
    <property type="match status" value="1"/>
</dbReference>
<dbReference type="FunFam" id="3.20.19.10:FF:000007">
    <property type="entry name" value="Isopropylmalate/citramalate isomerase small subunit"/>
    <property type="match status" value="1"/>
</dbReference>
<dbReference type="Gene3D" id="3.20.19.10">
    <property type="entry name" value="Aconitase, domain 4"/>
    <property type="match status" value="1"/>
</dbReference>
<dbReference type="HAMAP" id="MF_01032">
    <property type="entry name" value="LeuD_type2"/>
    <property type="match status" value="1"/>
</dbReference>
<dbReference type="InterPro" id="IPR015928">
    <property type="entry name" value="Aconitase/3IPM_dehydase_swvl"/>
</dbReference>
<dbReference type="InterPro" id="IPR000573">
    <property type="entry name" value="AconitaseA/IPMdHydase_ssu_swvl"/>
</dbReference>
<dbReference type="InterPro" id="IPR033940">
    <property type="entry name" value="IPMI_Swivel"/>
</dbReference>
<dbReference type="InterPro" id="IPR050075">
    <property type="entry name" value="LeuD"/>
</dbReference>
<dbReference type="InterPro" id="IPR011827">
    <property type="entry name" value="LeuD_type2/HacB/DmdB"/>
</dbReference>
<dbReference type="NCBIfam" id="NF040604">
    <property type="entry name" value="HacB_Meth"/>
    <property type="match status" value="1"/>
</dbReference>
<dbReference type="NCBIfam" id="TIGR02087">
    <property type="entry name" value="LEUD_arch"/>
    <property type="match status" value="1"/>
</dbReference>
<dbReference type="PANTHER" id="PTHR43345:SF2">
    <property type="entry name" value="3-ISOPROPYLMALATE DEHYDRATASE SMALL SUBUNIT 1"/>
    <property type="match status" value="1"/>
</dbReference>
<dbReference type="PANTHER" id="PTHR43345">
    <property type="entry name" value="3-ISOPROPYLMALATE DEHYDRATASE SMALL SUBUNIT 2-RELATED-RELATED"/>
    <property type="match status" value="1"/>
</dbReference>
<dbReference type="Pfam" id="PF00694">
    <property type="entry name" value="Aconitase_C"/>
    <property type="match status" value="1"/>
</dbReference>
<dbReference type="SUPFAM" id="SSF52016">
    <property type="entry name" value="LeuD/IlvD-like"/>
    <property type="match status" value="1"/>
</dbReference>
<sequence>MIIKGRAHKFGDDVDTDAIIPGPYLRTTDPYELASHCMAGIDENFPKKVKEGDVIVAGENFGCGSSREQAVIAIKYCGIKAVIAKSFARIFYRNAINVGLIPIIANTDEIKDGDIVEIDLDKEEIVITNKNKTIKCETPKGLEREILAAGGLVNYLKKRKLIQSKKGVKT</sequence>
<evidence type="ECO:0000269" key="1">
    <source>
    </source>
</evidence>
<evidence type="ECO:0000269" key="2">
    <source>
    </source>
</evidence>
<evidence type="ECO:0000269" key="3">
    <source>
    </source>
</evidence>
<evidence type="ECO:0000305" key="4"/>
<evidence type="ECO:0000305" key="5">
    <source>
    </source>
</evidence>
<evidence type="ECO:0007829" key="6">
    <source>
        <dbReference type="PDB" id="2PKP"/>
    </source>
</evidence>
<accession>Q58667</accession>
<name>HACB_METJA</name>
<reference key="1">
    <citation type="journal article" date="1996" name="Science">
        <title>Complete genome sequence of the methanogenic archaeon, Methanococcus jannaschii.</title>
        <authorList>
            <person name="Bult C.J."/>
            <person name="White O."/>
            <person name="Olsen G.J."/>
            <person name="Zhou L."/>
            <person name="Fleischmann R.D."/>
            <person name="Sutton G.G."/>
            <person name="Blake J.A."/>
            <person name="FitzGerald L.M."/>
            <person name="Clayton R.A."/>
            <person name="Gocayne J.D."/>
            <person name="Kerlavage A.R."/>
            <person name="Dougherty B.A."/>
            <person name="Tomb J.-F."/>
            <person name="Adams M.D."/>
            <person name="Reich C.I."/>
            <person name="Overbeek R."/>
            <person name="Kirkness E.F."/>
            <person name="Weinstock K.G."/>
            <person name="Merrick J.M."/>
            <person name="Glodek A."/>
            <person name="Scott J.L."/>
            <person name="Geoghagen N.S.M."/>
            <person name="Weidman J.F."/>
            <person name="Fuhrmann J.L."/>
            <person name="Nguyen D."/>
            <person name="Utterback T.R."/>
            <person name="Kelley J.M."/>
            <person name="Peterson J.D."/>
            <person name="Sadow P.W."/>
            <person name="Hanna M.C."/>
            <person name="Cotton M.D."/>
            <person name="Roberts K.M."/>
            <person name="Hurst M.A."/>
            <person name="Kaine B.P."/>
            <person name="Borodovsky M."/>
            <person name="Klenk H.-P."/>
            <person name="Fraser C.M."/>
            <person name="Smith H.O."/>
            <person name="Woese C.R."/>
            <person name="Venter J.C."/>
        </authorList>
    </citation>
    <scope>NUCLEOTIDE SEQUENCE [LARGE SCALE GENOMIC DNA]</scope>
    <source>
        <strain>ATCC 43067 / DSM 2661 / JAL-1 / JCM 10045 / NBRC 100440</strain>
    </source>
</reference>
<reference key="2">
    <citation type="journal article" date="2007" name="J. Bacteriol.">
        <title>Enzymology and evolution of the pyruvate pathway to 2-oxobutyrate in Methanocaldococcus jannaschii.</title>
        <authorList>
            <person name="Drevland R.M."/>
            <person name="Waheed A."/>
            <person name="Graham D.E."/>
        </authorList>
    </citation>
    <scope>PUTATIVE FUNCTION AS A HOMOACONITASE</scope>
    <scope>LACK OF FUNCTION AS A ISOPROPYLMALATE ISOMERASE</scope>
    <scope>SUBUNIT</scope>
    <source>
        <strain>ATCC 43067 / DSM 2661 / JAL-1 / JCM 10045 / NBRC 100440</strain>
    </source>
</reference>
<reference key="3">
    <citation type="journal article" date="2008" name="J. Biol. Chem.">
        <title>Methanogen homoaconitase catalyzes both hydrolyase reactions in coenzyme B biosynthesis.</title>
        <authorList>
            <person name="Drevland R.M."/>
            <person name="Jia Y."/>
            <person name="Palmer D.R.J."/>
            <person name="Graham D.E."/>
        </authorList>
    </citation>
    <scope>FUNCTION</scope>
    <scope>CATALYTIC ACTIVITY</scope>
    <scope>SUBSTRATE SPECIFICITY</scope>
    <scope>BIOPHYSICOCHEMICAL PROPERTIES</scope>
</reference>
<reference key="4">
    <citation type="journal article" date="2010" name="Biochemistry">
        <title>Substrate specificity determinants of the methanogen homoaconitase enzyme: structure and function of the small subunit.</title>
        <authorList>
            <person name="Jeyakanthan J."/>
            <person name="Drevland R.M."/>
            <person name="Gayathri D.R."/>
            <person name="Velmurugan D."/>
            <person name="Shinkai A."/>
            <person name="Kuramitsu S."/>
            <person name="Yokoyama S."/>
            <person name="Graham D.E."/>
        </authorList>
    </citation>
    <scope>X-RAY CRYSTALLOGRAPHY (2.1 ANGSTROMS)</scope>
    <scope>FUNCTION</scope>
    <scope>CATALYTIC ACTIVITY</scope>
    <scope>SUBSTRATE SPECIFICITY</scope>
    <scope>KINETIC PARAMETERS</scope>
    <scope>MUTAGENESIS OF ARG-26 AND THR-27</scope>
    <source>
        <strain>ATCC 43067 / DSM 2661 / JAL-1 / JCM 10045 / NBRC 100440</strain>
    </source>
</reference>
<protein>
    <recommendedName>
        <fullName>Methanogen homoaconitase small subunit</fullName>
        <shortName>HACN</shortName>
        <ecNumber evidence="2">4.2.1.114</ecNumber>
    </recommendedName>
    <alternativeName>
        <fullName>Homoaconitate hydratase</fullName>
    </alternativeName>
</protein>
<keyword id="KW-0002">3D-structure</keyword>
<keyword id="KW-0456">Lyase</keyword>
<keyword id="KW-1185">Reference proteome</keyword>
<feature type="chain" id="PRO_0000141936" description="Methanogen homoaconitase small subunit">
    <location>
        <begin position="1"/>
        <end position="170"/>
    </location>
</feature>
<feature type="short sequence motif" description="YLRT">
    <location>
        <begin position="24"/>
        <end position="27"/>
    </location>
</feature>
<feature type="site" description="Critical for substrate specificity">
    <location>
        <position position="26"/>
    </location>
</feature>
<feature type="mutagenesis site" description="Creates a promiscuous enzyme with both HACN and IPMI activities.">
    <original>RT</original>
    <variation>VY</variation>
    <location>
        <begin position="26"/>
        <end position="27"/>
    </location>
</feature>
<feature type="mutagenesis site" description="Allows the recognition of substrates of IPMI enzymes since it becomes able to efficiently catalyze citraconate hydration and 3-isopropylmalate dehydration. Largely decreases substrate affinity for cis-homo(1-3)-aconitate." evidence="3">
    <original>R</original>
    <variation>K</variation>
    <variation>V</variation>
    <location>
        <position position="26"/>
    </location>
</feature>
<feature type="mutagenesis site" description="Largely decreases substrate affinity for cis-homo(1-3)-aconitate while slightly increases activity on these substrates, and also decreases substrate affinity for maleate. Gains the ability to hydrate citraconate, an IPMI substrate." evidence="3">
    <original>T</original>
    <variation>A</variation>
    <location>
        <position position="27"/>
    </location>
</feature>
<feature type="strand" evidence="6">
    <location>
        <begin position="2"/>
        <end position="9"/>
    </location>
</feature>
<feature type="helix" evidence="6">
    <location>
        <begin position="16"/>
        <end position="19"/>
    </location>
</feature>
<feature type="helix" evidence="6">
    <location>
        <begin position="22"/>
        <end position="25"/>
    </location>
</feature>
<feature type="helix" evidence="6">
    <location>
        <begin position="30"/>
        <end position="34"/>
    </location>
</feature>
<feature type="turn" evidence="6">
    <location>
        <begin position="35"/>
        <end position="41"/>
    </location>
</feature>
<feature type="helix" evidence="6">
    <location>
        <begin position="45"/>
        <end position="48"/>
    </location>
</feature>
<feature type="strand" evidence="6">
    <location>
        <begin position="54"/>
        <end position="57"/>
    </location>
</feature>
<feature type="strand" evidence="6">
    <location>
        <begin position="59"/>
        <end position="61"/>
    </location>
</feature>
<feature type="strand" evidence="6">
    <location>
        <begin position="63"/>
        <end position="65"/>
    </location>
</feature>
<feature type="helix" evidence="6">
    <location>
        <begin position="68"/>
        <end position="75"/>
    </location>
</feature>
<feature type="turn" evidence="6">
    <location>
        <begin position="76"/>
        <end position="78"/>
    </location>
</feature>
<feature type="strand" evidence="6">
    <location>
        <begin position="81"/>
        <end position="85"/>
    </location>
</feature>
<feature type="helix" evidence="6">
    <location>
        <begin position="89"/>
        <end position="97"/>
    </location>
</feature>
<feature type="strand" evidence="6">
    <location>
        <begin position="101"/>
        <end position="104"/>
    </location>
</feature>
<feature type="helix" evidence="6">
    <location>
        <begin position="107"/>
        <end position="109"/>
    </location>
</feature>
<feature type="strand" evidence="6">
    <location>
        <begin position="115"/>
        <end position="119"/>
    </location>
</feature>
<feature type="turn" evidence="6">
    <location>
        <begin position="120"/>
        <end position="123"/>
    </location>
</feature>
<feature type="strand" evidence="6">
    <location>
        <begin position="124"/>
        <end position="127"/>
    </location>
</feature>
<feature type="helix" evidence="6">
    <location>
        <begin position="128"/>
        <end position="130"/>
    </location>
</feature>
<feature type="strand" evidence="6">
    <location>
        <begin position="132"/>
        <end position="135"/>
    </location>
</feature>
<feature type="helix" evidence="6">
    <location>
        <begin position="141"/>
        <end position="148"/>
    </location>
</feature>
<feature type="helix" evidence="6">
    <location>
        <begin position="152"/>
        <end position="164"/>
    </location>
</feature>